<organism>
    <name type="scientific">Homo sapiens</name>
    <name type="common">Human</name>
    <dbReference type="NCBI Taxonomy" id="9606"/>
    <lineage>
        <taxon>Eukaryota</taxon>
        <taxon>Metazoa</taxon>
        <taxon>Chordata</taxon>
        <taxon>Craniata</taxon>
        <taxon>Vertebrata</taxon>
        <taxon>Euteleostomi</taxon>
        <taxon>Mammalia</taxon>
        <taxon>Eutheria</taxon>
        <taxon>Euarchontoglires</taxon>
        <taxon>Primates</taxon>
        <taxon>Haplorrhini</taxon>
        <taxon>Catarrhini</taxon>
        <taxon>Hominidae</taxon>
        <taxon>Homo</taxon>
    </lineage>
</organism>
<sequence length="271" mass="29405">MRDRRGPLGTCLAQVQWAGGGDSDKLSYSLKKRMPTEGPWPADAPSWMNKPAVDGNSQSEALSLEMAGLSLPSGGPVLPYVKESARRNPASAATPSAAVGLFPAPTEYFARVSCSGVEALGRDWLGGGPRATHGHRGQCPKGEPRVSRLTRHQKLPEMGSFWDDPPSAFPSGLGSELEPSCLHSILSATLHACPEVLLKDETKRIFLDLLNPMFSKQTIEFKKMFKSTSDGLQITLGLLALQHFELANSLCHSLKYKQNNASRLILRVVLE</sequence>
<comment type="caution">
    <text evidence="1">Could be the product of a pseudogene.</text>
</comment>
<accession>B1ANY3</accession>
<reference key="1">
    <citation type="journal article" date="2004" name="Nature">
        <title>DNA sequence and analysis of human chromosome 9.</title>
        <authorList>
            <person name="Humphray S.J."/>
            <person name="Oliver K."/>
            <person name="Hunt A.R."/>
            <person name="Plumb R.W."/>
            <person name="Loveland J.E."/>
            <person name="Howe K.L."/>
            <person name="Andrews T.D."/>
            <person name="Searle S."/>
            <person name="Hunt S.E."/>
            <person name="Scott C.E."/>
            <person name="Jones M.C."/>
            <person name="Ainscough R."/>
            <person name="Almeida J.P."/>
            <person name="Ambrose K.D."/>
            <person name="Ashwell R.I.S."/>
            <person name="Babbage A.K."/>
            <person name="Babbage S."/>
            <person name="Bagguley C.L."/>
            <person name="Bailey J."/>
            <person name="Banerjee R."/>
            <person name="Barker D.J."/>
            <person name="Barlow K.F."/>
            <person name="Bates K."/>
            <person name="Beasley H."/>
            <person name="Beasley O."/>
            <person name="Bird C.P."/>
            <person name="Bray-Allen S."/>
            <person name="Brown A.J."/>
            <person name="Brown J.Y."/>
            <person name="Burford D."/>
            <person name="Burrill W."/>
            <person name="Burton J."/>
            <person name="Carder C."/>
            <person name="Carter N.P."/>
            <person name="Chapman J.C."/>
            <person name="Chen Y."/>
            <person name="Clarke G."/>
            <person name="Clark S.Y."/>
            <person name="Clee C.M."/>
            <person name="Clegg S."/>
            <person name="Collier R.E."/>
            <person name="Corby N."/>
            <person name="Crosier M."/>
            <person name="Cummings A.T."/>
            <person name="Davies J."/>
            <person name="Dhami P."/>
            <person name="Dunn M."/>
            <person name="Dutta I."/>
            <person name="Dyer L.W."/>
            <person name="Earthrowl M.E."/>
            <person name="Faulkner L."/>
            <person name="Fleming C.J."/>
            <person name="Frankish A."/>
            <person name="Frankland J.A."/>
            <person name="French L."/>
            <person name="Fricker D.G."/>
            <person name="Garner P."/>
            <person name="Garnett J."/>
            <person name="Ghori J."/>
            <person name="Gilbert J.G.R."/>
            <person name="Glison C."/>
            <person name="Grafham D.V."/>
            <person name="Gribble S."/>
            <person name="Griffiths C."/>
            <person name="Griffiths-Jones S."/>
            <person name="Grocock R."/>
            <person name="Guy J."/>
            <person name="Hall R.E."/>
            <person name="Hammond S."/>
            <person name="Harley J.L."/>
            <person name="Harrison E.S.I."/>
            <person name="Hart E.A."/>
            <person name="Heath P.D."/>
            <person name="Henderson C.D."/>
            <person name="Hopkins B.L."/>
            <person name="Howard P.J."/>
            <person name="Howden P.J."/>
            <person name="Huckle E."/>
            <person name="Johnson C."/>
            <person name="Johnson D."/>
            <person name="Joy A.A."/>
            <person name="Kay M."/>
            <person name="Keenan S."/>
            <person name="Kershaw J.K."/>
            <person name="Kimberley A.M."/>
            <person name="King A."/>
            <person name="Knights A."/>
            <person name="Laird G.K."/>
            <person name="Langford C."/>
            <person name="Lawlor S."/>
            <person name="Leongamornlert D.A."/>
            <person name="Leversha M."/>
            <person name="Lloyd C."/>
            <person name="Lloyd D.M."/>
            <person name="Lovell J."/>
            <person name="Martin S."/>
            <person name="Mashreghi-Mohammadi M."/>
            <person name="Matthews L."/>
            <person name="McLaren S."/>
            <person name="McLay K.E."/>
            <person name="McMurray A."/>
            <person name="Milne S."/>
            <person name="Nickerson T."/>
            <person name="Nisbett J."/>
            <person name="Nordsiek G."/>
            <person name="Pearce A.V."/>
            <person name="Peck A.I."/>
            <person name="Porter K.M."/>
            <person name="Pandian R."/>
            <person name="Pelan S."/>
            <person name="Phillimore B."/>
            <person name="Povey S."/>
            <person name="Ramsey Y."/>
            <person name="Rand V."/>
            <person name="Scharfe M."/>
            <person name="Sehra H.K."/>
            <person name="Shownkeen R."/>
            <person name="Sims S.K."/>
            <person name="Skuce C.D."/>
            <person name="Smith M."/>
            <person name="Steward C.A."/>
            <person name="Swarbreck D."/>
            <person name="Sycamore N."/>
            <person name="Tester J."/>
            <person name="Thorpe A."/>
            <person name="Tracey A."/>
            <person name="Tromans A."/>
            <person name="Thomas D.W."/>
            <person name="Wall M."/>
            <person name="Wallis J.M."/>
            <person name="West A.P."/>
            <person name="Whitehead S.L."/>
            <person name="Willey D.L."/>
            <person name="Williams S.A."/>
            <person name="Wilming L."/>
            <person name="Wray P.W."/>
            <person name="Young L."/>
            <person name="Ashurst J.L."/>
            <person name="Coulson A."/>
            <person name="Blocker H."/>
            <person name="Durbin R.M."/>
            <person name="Sulston J.E."/>
            <person name="Hubbard T."/>
            <person name="Jackson M.J."/>
            <person name="Bentley D.R."/>
            <person name="Beck S."/>
            <person name="Rogers J."/>
            <person name="Dunham I."/>
        </authorList>
    </citation>
    <scope>NUCLEOTIDE SEQUENCE [LARGE SCALE GENOMIC DNA]</scope>
</reference>
<gene>
    <name type="primary">FAM220BP</name>
    <name type="synonym">C9orf51</name>
</gene>
<feature type="chain" id="PRO_0000344620" description="Putative protein FAM220BP">
    <location>
        <begin position="1"/>
        <end position="271"/>
    </location>
</feature>
<feature type="sequence variant" id="VAR_050820" description="In dbSNP:rs1832322.">
    <original>W</original>
    <variation>R</variation>
    <location>
        <position position="162"/>
    </location>
</feature>
<feature type="sequence variant" id="VAR_050821" description="In dbSNP:rs1832323.">
    <original>K</original>
    <variation>N</variation>
    <location>
        <position position="199"/>
    </location>
</feature>
<feature type="sequence variant" id="VAR_050822" description="In dbSNP:rs12336220.">
    <original>K</original>
    <variation>N</variation>
    <location>
        <position position="203"/>
    </location>
</feature>
<protein>
    <recommendedName>
        <fullName>Putative protein FAM220BP</fullName>
    </recommendedName>
    <alternativeName>
        <fullName>Protein FAM220B pseudogene</fullName>
    </alternativeName>
</protein>
<evidence type="ECO:0000305" key="1"/>
<dbReference type="EMBL" id="AL390726">
    <property type="status" value="NOT_ANNOTATED_CDS"/>
    <property type="molecule type" value="Genomic_DNA"/>
</dbReference>
<dbReference type="FunCoup" id="B1ANY3">
    <property type="interactions" value="320"/>
</dbReference>
<dbReference type="GlyGen" id="B1ANY3">
    <property type="glycosylation" value="1 site"/>
</dbReference>
<dbReference type="BioMuta" id="HGNC:23678"/>
<dbReference type="MassIVE" id="B1ANY3"/>
<dbReference type="ProteomicsDB" id="3273"/>
<dbReference type="AGR" id="HGNC:23678"/>
<dbReference type="GeneCards" id="FAM220BP"/>
<dbReference type="HGNC" id="HGNC:23678">
    <property type="gene designation" value="FAM220BP"/>
</dbReference>
<dbReference type="neXtProt" id="NX_B1ANY3"/>
<dbReference type="InParanoid" id="B1ANY3"/>
<dbReference type="PAN-GO" id="B1ANY3">
    <property type="GO annotations" value="4 GO annotations based on evolutionary models"/>
</dbReference>
<dbReference type="PhylomeDB" id="B1ANY3"/>
<dbReference type="Pharos" id="B1ANY3">
    <property type="development level" value="Tdark"/>
</dbReference>
<dbReference type="Proteomes" id="UP000005640">
    <property type="component" value="Unplaced"/>
</dbReference>
<dbReference type="RNAct" id="B1ANY3">
    <property type="molecule type" value="protein"/>
</dbReference>
<dbReference type="GO" id="GO:0005634">
    <property type="term" value="C:nucleus"/>
    <property type="evidence" value="ECO:0000318"/>
    <property type="project" value="GO_Central"/>
</dbReference>
<dbReference type="GO" id="GO:0097677">
    <property type="term" value="F:STAT family protein binding"/>
    <property type="evidence" value="ECO:0000318"/>
    <property type="project" value="GO_Central"/>
</dbReference>
<dbReference type="GO" id="GO:0000122">
    <property type="term" value="P:negative regulation of transcription by RNA polymerase II"/>
    <property type="evidence" value="ECO:0000318"/>
    <property type="project" value="GO_Central"/>
</dbReference>
<dbReference type="InterPro" id="IPR040355">
    <property type="entry name" value="FAM220A"/>
</dbReference>
<dbReference type="InterPro" id="IPR029155">
    <property type="entry name" value="SIPAR"/>
</dbReference>
<dbReference type="PANTHER" id="PTHR31980">
    <property type="entry name" value="PROTEIN FAM220A"/>
    <property type="match status" value="1"/>
</dbReference>
<dbReference type="PANTHER" id="PTHR31980:SF2">
    <property type="entry name" value="PROTEIN FAM220BP-RELATED"/>
    <property type="match status" value="1"/>
</dbReference>
<dbReference type="Pfam" id="PF15487">
    <property type="entry name" value="FAM220"/>
    <property type="match status" value="1"/>
</dbReference>
<name>F220P_HUMAN</name>
<keyword id="KW-1185">Reference proteome</keyword>
<proteinExistence type="uncertain"/>